<reference key="1">
    <citation type="journal article" date="2008" name="J. Bacteriol.">
        <title>The pangenome structure of Escherichia coli: comparative genomic analysis of E. coli commensal and pathogenic isolates.</title>
        <authorList>
            <person name="Rasko D.A."/>
            <person name="Rosovitz M.J."/>
            <person name="Myers G.S.A."/>
            <person name="Mongodin E.F."/>
            <person name="Fricke W.F."/>
            <person name="Gajer P."/>
            <person name="Crabtree J."/>
            <person name="Sebaihia M."/>
            <person name="Thomson N.R."/>
            <person name="Chaudhuri R."/>
            <person name="Henderson I.R."/>
            <person name="Sperandio V."/>
            <person name="Ravel J."/>
        </authorList>
    </citation>
    <scope>NUCLEOTIDE SEQUENCE [LARGE SCALE GENOMIC DNA]</scope>
    <source>
        <strain>E24377A / ETEC</strain>
    </source>
</reference>
<gene>
    <name evidence="1" type="primary">dgt</name>
    <name type="ordered locus">EcE24377A_0165</name>
</gene>
<sequence>MAQIDFRKKINWHRRYRSPQGVKTEHEILRIFESDRGRIINSPAIRRLQQKTQVFPLERNAAVRTRLTHSMEVQQVGRYIAKEILSRLKELKLLEAYGLDELTGPFESIVEMSCLMHDIGNPPFGHFGEAAINDWFRQRLYPEDAESQPLTDDRCSVAALRLRDGEEPLNELRRKIRQDLCHFEGNAQGIRLVHTLMRMNLTWAQVGGILKYTRPAWWRGETPETHHYLMKKPGYYLSEEAYIARLRKELNLALYSRFPLTWIMEAADDISYCVADLEDAVEKRIFTVEQLYHHLHEAWGQHEKGSLFSLVVENAWEKSRSNSLSRSTEDQFFMYLRVNTLNKLVPYAAQRFIDNLPAIFAGTFNHALLEDASECSDLLKLYKNVAVKHVFSHPDVEQLELQGYRVISGLLEIYRPLLSLSLSDFTELVEKERVKRFPIESRLFHKLSTRHRLAYVEAVSKLPSDSPEFPLWEYYYRCRLLQDYISGMTDLYAWDEYRRLMAVEQ</sequence>
<dbReference type="EC" id="3.1.5.1" evidence="1"/>
<dbReference type="EMBL" id="CP000800">
    <property type="protein sequence ID" value="ABV17589.1"/>
    <property type="molecule type" value="Genomic_DNA"/>
</dbReference>
<dbReference type="RefSeq" id="WP_000057094.1">
    <property type="nucleotide sequence ID" value="NC_009801.1"/>
</dbReference>
<dbReference type="SMR" id="A7ZHQ2"/>
<dbReference type="GeneID" id="75202025"/>
<dbReference type="KEGG" id="ecw:EcE24377A_0165"/>
<dbReference type="HOGENOM" id="CLU_028163_2_1_6"/>
<dbReference type="Proteomes" id="UP000001122">
    <property type="component" value="Chromosome"/>
</dbReference>
<dbReference type="GO" id="GO:0008832">
    <property type="term" value="F:dGTPase activity"/>
    <property type="evidence" value="ECO:0007669"/>
    <property type="project" value="UniProtKB-UniRule"/>
</dbReference>
<dbReference type="GO" id="GO:0000287">
    <property type="term" value="F:magnesium ion binding"/>
    <property type="evidence" value="ECO:0007669"/>
    <property type="project" value="UniProtKB-UniRule"/>
</dbReference>
<dbReference type="GO" id="GO:0006203">
    <property type="term" value="P:dGTP catabolic process"/>
    <property type="evidence" value="ECO:0007669"/>
    <property type="project" value="InterPro"/>
</dbReference>
<dbReference type="CDD" id="cd00077">
    <property type="entry name" value="HDc"/>
    <property type="match status" value="1"/>
</dbReference>
<dbReference type="FunFam" id="1.10.3210.10:FF:000009">
    <property type="entry name" value="Deoxyguanosinetriphosphate triphosphohydrolase"/>
    <property type="match status" value="1"/>
</dbReference>
<dbReference type="FunFam" id="1.10.3210.10:FF:000010">
    <property type="entry name" value="Deoxyguanosinetriphosphate triphosphohydrolase"/>
    <property type="match status" value="1"/>
</dbReference>
<dbReference type="FunFam" id="1.10.3410.10:FF:000001">
    <property type="entry name" value="Deoxyguanosinetriphosphate triphosphohydrolase"/>
    <property type="match status" value="1"/>
</dbReference>
<dbReference type="Gene3D" id="1.10.3210.10">
    <property type="entry name" value="Hypothetical protein af1432"/>
    <property type="match status" value="2"/>
</dbReference>
<dbReference type="Gene3D" id="1.10.3410.10">
    <property type="entry name" value="putative deoxyguanosinetriphosphate triphosphohydrolase like domain"/>
    <property type="match status" value="1"/>
</dbReference>
<dbReference type="HAMAP" id="MF_00030">
    <property type="entry name" value="dGTPase_type1"/>
    <property type="match status" value="1"/>
</dbReference>
<dbReference type="InterPro" id="IPR023293">
    <property type="entry name" value="dGTP_triP_hydro_central_sf"/>
</dbReference>
<dbReference type="InterPro" id="IPR006261">
    <property type="entry name" value="dGTPase"/>
</dbReference>
<dbReference type="InterPro" id="IPR050135">
    <property type="entry name" value="dGTPase-like"/>
</dbReference>
<dbReference type="InterPro" id="IPR020779">
    <property type="entry name" value="dNTPase_1"/>
</dbReference>
<dbReference type="InterPro" id="IPR003607">
    <property type="entry name" value="HD/PDEase_dom"/>
</dbReference>
<dbReference type="InterPro" id="IPR006674">
    <property type="entry name" value="HD_domain"/>
</dbReference>
<dbReference type="NCBIfam" id="TIGR01353">
    <property type="entry name" value="dGTP_triPase"/>
    <property type="match status" value="1"/>
</dbReference>
<dbReference type="NCBIfam" id="NF003429">
    <property type="entry name" value="PRK04926.1"/>
    <property type="match status" value="1"/>
</dbReference>
<dbReference type="PANTHER" id="PTHR11373:SF32">
    <property type="entry name" value="DEOXYGUANOSINETRIPHOSPHATE TRIPHOSPHOHYDROLASE"/>
    <property type="match status" value="1"/>
</dbReference>
<dbReference type="PANTHER" id="PTHR11373">
    <property type="entry name" value="DEOXYNUCLEOSIDE TRIPHOSPHATE TRIPHOSPHOHYDROLASE"/>
    <property type="match status" value="1"/>
</dbReference>
<dbReference type="Pfam" id="PF01966">
    <property type="entry name" value="HD"/>
    <property type="match status" value="1"/>
</dbReference>
<dbReference type="SMART" id="SM00471">
    <property type="entry name" value="HDc"/>
    <property type="match status" value="1"/>
</dbReference>
<dbReference type="SUPFAM" id="SSF109604">
    <property type="entry name" value="HD-domain/PDEase-like"/>
    <property type="match status" value="1"/>
</dbReference>
<dbReference type="PROSITE" id="PS51831">
    <property type="entry name" value="HD"/>
    <property type="match status" value="1"/>
</dbReference>
<accession>A7ZHQ2</accession>
<protein>
    <recommendedName>
        <fullName evidence="1">Deoxyguanosinetriphosphate triphosphohydrolase</fullName>
        <shortName evidence="1">dGTP triphosphohydrolase</shortName>
        <shortName evidence="1">dGTPase</shortName>
        <ecNumber evidence="1">3.1.5.1</ecNumber>
    </recommendedName>
</protein>
<keyword id="KW-0378">Hydrolase</keyword>
<keyword id="KW-0460">Magnesium</keyword>
<keyword id="KW-1185">Reference proteome</keyword>
<evidence type="ECO:0000255" key="1">
    <source>
        <dbReference type="HAMAP-Rule" id="MF_00030"/>
    </source>
</evidence>
<evidence type="ECO:0000255" key="2">
    <source>
        <dbReference type="PROSITE-ProRule" id="PRU01175"/>
    </source>
</evidence>
<comment type="function">
    <text evidence="1">dGTPase preferentially hydrolyzes dGTP over the other canonical NTPs.</text>
</comment>
<comment type="catalytic activity">
    <reaction evidence="1">
        <text>dGTP + H2O = 2'-deoxyguanosine + triphosphate + H(+)</text>
        <dbReference type="Rhea" id="RHEA:15193"/>
        <dbReference type="ChEBI" id="CHEBI:15377"/>
        <dbReference type="ChEBI" id="CHEBI:15378"/>
        <dbReference type="ChEBI" id="CHEBI:17172"/>
        <dbReference type="ChEBI" id="CHEBI:18036"/>
        <dbReference type="ChEBI" id="CHEBI:61429"/>
        <dbReference type="EC" id="3.1.5.1"/>
    </reaction>
</comment>
<comment type="cofactor">
    <cofactor evidence="1">
        <name>Mg(2+)</name>
        <dbReference type="ChEBI" id="CHEBI:18420"/>
    </cofactor>
</comment>
<comment type="subunit">
    <text evidence="1">Homotetramer.</text>
</comment>
<comment type="similarity">
    <text evidence="1">Belongs to the dGTPase family. Type 1 subfamily.</text>
</comment>
<feature type="chain" id="PRO_1000057227" description="Deoxyguanosinetriphosphate triphosphohydrolase">
    <location>
        <begin position="1"/>
        <end position="505"/>
    </location>
</feature>
<feature type="domain" description="HD" evidence="2">
    <location>
        <begin position="66"/>
        <end position="273"/>
    </location>
</feature>
<proteinExistence type="inferred from homology"/>
<organism>
    <name type="scientific">Escherichia coli O139:H28 (strain E24377A / ETEC)</name>
    <dbReference type="NCBI Taxonomy" id="331111"/>
    <lineage>
        <taxon>Bacteria</taxon>
        <taxon>Pseudomonadati</taxon>
        <taxon>Pseudomonadota</taxon>
        <taxon>Gammaproteobacteria</taxon>
        <taxon>Enterobacterales</taxon>
        <taxon>Enterobacteriaceae</taxon>
        <taxon>Escherichia</taxon>
    </lineage>
</organism>
<name>DGTP_ECO24</name>